<proteinExistence type="inferred from homology"/>
<name>RL27_PARPJ</name>
<dbReference type="EMBL" id="CP001052">
    <property type="protein sequence ID" value="ACD17838.1"/>
    <property type="molecule type" value="Genomic_DNA"/>
</dbReference>
<dbReference type="RefSeq" id="WP_007180330.1">
    <property type="nucleotide sequence ID" value="NC_010681.1"/>
</dbReference>
<dbReference type="SMR" id="B2SYV3"/>
<dbReference type="STRING" id="398527.Bphyt_3448"/>
<dbReference type="GeneID" id="97303688"/>
<dbReference type="KEGG" id="bpy:Bphyt_3448"/>
<dbReference type="eggNOG" id="COG0211">
    <property type="taxonomic scope" value="Bacteria"/>
</dbReference>
<dbReference type="HOGENOM" id="CLU_095424_4_1_4"/>
<dbReference type="OrthoDB" id="9803474at2"/>
<dbReference type="Proteomes" id="UP000001739">
    <property type="component" value="Chromosome 1"/>
</dbReference>
<dbReference type="GO" id="GO:0022625">
    <property type="term" value="C:cytosolic large ribosomal subunit"/>
    <property type="evidence" value="ECO:0007669"/>
    <property type="project" value="TreeGrafter"/>
</dbReference>
<dbReference type="GO" id="GO:0003735">
    <property type="term" value="F:structural constituent of ribosome"/>
    <property type="evidence" value="ECO:0007669"/>
    <property type="project" value="InterPro"/>
</dbReference>
<dbReference type="GO" id="GO:0006412">
    <property type="term" value="P:translation"/>
    <property type="evidence" value="ECO:0007669"/>
    <property type="project" value="UniProtKB-UniRule"/>
</dbReference>
<dbReference type="FunFam" id="2.40.50.100:FF:000020">
    <property type="entry name" value="50S ribosomal protein L27"/>
    <property type="match status" value="1"/>
</dbReference>
<dbReference type="Gene3D" id="2.40.50.100">
    <property type="match status" value="1"/>
</dbReference>
<dbReference type="HAMAP" id="MF_00539">
    <property type="entry name" value="Ribosomal_bL27"/>
    <property type="match status" value="1"/>
</dbReference>
<dbReference type="InterPro" id="IPR001684">
    <property type="entry name" value="Ribosomal_bL27"/>
</dbReference>
<dbReference type="InterPro" id="IPR018261">
    <property type="entry name" value="Ribosomal_bL27_CS"/>
</dbReference>
<dbReference type="NCBIfam" id="TIGR00062">
    <property type="entry name" value="L27"/>
    <property type="match status" value="1"/>
</dbReference>
<dbReference type="PANTHER" id="PTHR15893:SF0">
    <property type="entry name" value="LARGE RIBOSOMAL SUBUNIT PROTEIN BL27M"/>
    <property type="match status" value="1"/>
</dbReference>
<dbReference type="PANTHER" id="PTHR15893">
    <property type="entry name" value="RIBOSOMAL PROTEIN L27"/>
    <property type="match status" value="1"/>
</dbReference>
<dbReference type="Pfam" id="PF01016">
    <property type="entry name" value="Ribosomal_L27"/>
    <property type="match status" value="1"/>
</dbReference>
<dbReference type="PRINTS" id="PR00063">
    <property type="entry name" value="RIBOSOMALL27"/>
</dbReference>
<dbReference type="SUPFAM" id="SSF110324">
    <property type="entry name" value="Ribosomal L27 protein-like"/>
    <property type="match status" value="1"/>
</dbReference>
<dbReference type="PROSITE" id="PS00831">
    <property type="entry name" value="RIBOSOMAL_L27"/>
    <property type="match status" value="1"/>
</dbReference>
<accession>B2SYV3</accession>
<evidence type="ECO:0000255" key="1">
    <source>
        <dbReference type="HAMAP-Rule" id="MF_00539"/>
    </source>
</evidence>
<evidence type="ECO:0000256" key="2">
    <source>
        <dbReference type="SAM" id="MobiDB-lite"/>
    </source>
</evidence>
<evidence type="ECO:0000305" key="3"/>
<protein>
    <recommendedName>
        <fullName evidence="1">Large ribosomal subunit protein bL27</fullName>
    </recommendedName>
    <alternativeName>
        <fullName evidence="3">50S ribosomal protein L27</fullName>
    </alternativeName>
</protein>
<keyword id="KW-0687">Ribonucleoprotein</keyword>
<keyword id="KW-0689">Ribosomal protein</keyword>
<feature type="chain" id="PRO_1000128709" description="Large ribosomal subunit protein bL27">
    <location>
        <begin position="1"/>
        <end position="87"/>
    </location>
</feature>
<feature type="region of interest" description="Disordered" evidence="2">
    <location>
        <begin position="1"/>
        <end position="21"/>
    </location>
</feature>
<sequence length="87" mass="9104">MAHKKAGGSSRNGRDSESKRLGVKVYGGQAINAGGIIVRQRGTRMHPGENVGIGKDHTLFALTDGHVNFSTKGAAKKHMVNVVPAAV</sequence>
<reference key="1">
    <citation type="journal article" date="2011" name="J. Bacteriol.">
        <title>Complete genome sequence of the plant growth-promoting endophyte Burkholderia phytofirmans strain PsJN.</title>
        <authorList>
            <person name="Weilharter A."/>
            <person name="Mitter B."/>
            <person name="Shin M.V."/>
            <person name="Chain P.S."/>
            <person name="Nowak J."/>
            <person name="Sessitsch A."/>
        </authorList>
    </citation>
    <scope>NUCLEOTIDE SEQUENCE [LARGE SCALE GENOMIC DNA]</scope>
    <source>
        <strain>DSM 17436 / LMG 22146 / PsJN</strain>
    </source>
</reference>
<comment type="similarity">
    <text evidence="1">Belongs to the bacterial ribosomal protein bL27 family.</text>
</comment>
<organism>
    <name type="scientific">Paraburkholderia phytofirmans (strain DSM 17436 / LMG 22146 / PsJN)</name>
    <name type="common">Burkholderia phytofirmans</name>
    <dbReference type="NCBI Taxonomy" id="398527"/>
    <lineage>
        <taxon>Bacteria</taxon>
        <taxon>Pseudomonadati</taxon>
        <taxon>Pseudomonadota</taxon>
        <taxon>Betaproteobacteria</taxon>
        <taxon>Burkholderiales</taxon>
        <taxon>Burkholderiaceae</taxon>
        <taxon>Paraburkholderia</taxon>
    </lineage>
</organism>
<gene>
    <name evidence="1" type="primary">rpmA</name>
    <name type="ordered locus">Bphyt_3448</name>
</gene>